<gene>
    <name evidence="1" type="primary">gltX</name>
    <name type="ordered locus">Sfum_1366</name>
</gene>
<keyword id="KW-0030">Aminoacyl-tRNA synthetase</keyword>
<keyword id="KW-0067">ATP-binding</keyword>
<keyword id="KW-0963">Cytoplasm</keyword>
<keyword id="KW-0436">Ligase</keyword>
<keyword id="KW-0479">Metal-binding</keyword>
<keyword id="KW-0547">Nucleotide-binding</keyword>
<keyword id="KW-0648">Protein biosynthesis</keyword>
<keyword id="KW-1185">Reference proteome</keyword>
<keyword id="KW-0862">Zinc</keyword>
<name>SYE_SYNFM</name>
<dbReference type="EC" id="6.1.1.17" evidence="1"/>
<dbReference type="EMBL" id="CP000478">
    <property type="protein sequence ID" value="ABK17057.1"/>
    <property type="molecule type" value="Genomic_DNA"/>
</dbReference>
<dbReference type="RefSeq" id="WP_011698228.1">
    <property type="nucleotide sequence ID" value="NC_008554.1"/>
</dbReference>
<dbReference type="SMR" id="A0LI05"/>
<dbReference type="FunCoup" id="A0LI05">
    <property type="interactions" value="584"/>
</dbReference>
<dbReference type="STRING" id="335543.Sfum_1366"/>
<dbReference type="KEGG" id="sfu:Sfum_1366"/>
<dbReference type="eggNOG" id="COG0008">
    <property type="taxonomic scope" value="Bacteria"/>
</dbReference>
<dbReference type="HOGENOM" id="CLU_015768_6_3_7"/>
<dbReference type="InParanoid" id="A0LI05"/>
<dbReference type="OrthoDB" id="9807503at2"/>
<dbReference type="Proteomes" id="UP000001784">
    <property type="component" value="Chromosome"/>
</dbReference>
<dbReference type="GO" id="GO:0005829">
    <property type="term" value="C:cytosol"/>
    <property type="evidence" value="ECO:0007669"/>
    <property type="project" value="TreeGrafter"/>
</dbReference>
<dbReference type="GO" id="GO:0005524">
    <property type="term" value="F:ATP binding"/>
    <property type="evidence" value="ECO:0007669"/>
    <property type="project" value="UniProtKB-UniRule"/>
</dbReference>
<dbReference type="GO" id="GO:0004818">
    <property type="term" value="F:glutamate-tRNA ligase activity"/>
    <property type="evidence" value="ECO:0007669"/>
    <property type="project" value="UniProtKB-UniRule"/>
</dbReference>
<dbReference type="GO" id="GO:0000049">
    <property type="term" value="F:tRNA binding"/>
    <property type="evidence" value="ECO:0007669"/>
    <property type="project" value="InterPro"/>
</dbReference>
<dbReference type="GO" id="GO:0008270">
    <property type="term" value="F:zinc ion binding"/>
    <property type="evidence" value="ECO:0007669"/>
    <property type="project" value="UniProtKB-UniRule"/>
</dbReference>
<dbReference type="GO" id="GO:0006424">
    <property type="term" value="P:glutamyl-tRNA aminoacylation"/>
    <property type="evidence" value="ECO:0007669"/>
    <property type="project" value="UniProtKB-UniRule"/>
</dbReference>
<dbReference type="CDD" id="cd00808">
    <property type="entry name" value="GluRS_core"/>
    <property type="match status" value="1"/>
</dbReference>
<dbReference type="FunFam" id="3.40.50.620:FF:000007">
    <property type="entry name" value="Glutamate--tRNA ligase"/>
    <property type="match status" value="1"/>
</dbReference>
<dbReference type="Gene3D" id="1.10.10.350">
    <property type="match status" value="1"/>
</dbReference>
<dbReference type="Gene3D" id="1.10.8.70">
    <property type="entry name" value="Glutamate-tRNA synthetase, class I, anticodon-binding domain 1"/>
    <property type="match status" value="1"/>
</dbReference>
<dbReference type="Gene3D" id="3.40.50.620">
    <property type="entry name" value="HUPs"/>
    <property type="match status" value="1"/>
</dbReference>
<dbReference type="HAMAP" id="MF_00022">
    <property type="entry name" value="Glu_tRNA_synth_type1"/>
    <property type="match status" value="1"/>
</dbReference>
<dbReference type="InterPro" id="IPR045462">
    <property type="entry name" value="aa-tRNA-synth_I_cd-bd"/>
</dbReference>
<dbReference type="InterPro" id="IPR020751">
    <property type="entry name" value="aa-tRNA-synth_I_codon-bd_sub2"/>
</dbReference>
<dbReference type="InterPro" id="IPR001412">
    <property type="entry name" value="aa-tRNA-synth_I_CS"/>
</dbReference>
<dbReference type="InterPro" id="IPR008925">
    <property type="entry name" value="aa_tRNA-synth_I_cd-bd_sf"/>
</dbReference>
<dbReference type="InterPro" id="IPR004527">
    <property type="entry name" value="Glu-tRNA-ligase_bac/mito"/>
</dbReference>
<dbReference type="InterPro" id="IPR020752">
    <property type="entry name" value="Glu-tRNA-synth_I_codon-bd_sub1"/>
</dbReference>
<dbReference type="InterPro" id="IPR000924">
    <property type="entry name" value="Glu/Gln-tRNA-synth"/>
</dbReference>
<dbReference type="InterPro" id="IPR020058">
    <property type="entry name" value="Glu/Gln-tRNA-synth_Ib_cat-dom"/>
</dbReference>
<dbReference type="InterPro" id="IPR049940">
    <property type="entry name" value="GluQ/Sye"/>
</dbReference>
<dbReference type="InterPro" id="IPR033910">
    <property type="entry name" value="GluRS_core"/>
</dbReference>
<dbReference type="InterPro" id="IPR014729">
    <property type="entry name" value="Rossmann-like_a/b/a_fold"/>
</dbReference>
<dbReference type="NCBIfam" id="TIGR00464">
    <property type="entry name" value="gltX_bact"/>
    <property type="match status" value="1"/>
</dbReference>
<dbReference type="PANTHER" id="PTHR43311">
    <property type="entry name" value="GLUTAMATE--TRNA LIGASE"/>
    <property type="match status" value="1"/>
</dbReference>
<dbReference type="PANTHER" id="PTHR43311:SF2">
    <property type="entry name" value="GLUTAMATE--TRNA LIGASE, MITOCHONDRIAL-RELATED"/>
    <property type="match status" value="1"/>
</dbReference>
<dbReference type="Pfam" id="PF19269">
    <property type="entry name" value="Anticodon_2"/>
    <property type="match status" value="1"/>
</dbReference>
<dbReference type="Pfam" id="PF00749">
    <property type="entry name" value="tRNA-synt_1c"/>
    <property type="match status" value="1"/>
</dbReference>
<dbReference type="PRINTS" id="PR00987">
    <property type="entry name" value="TRNASYNTHGLU"/>
</dbReference>
<dbReference type="SUPFAM" id="SSF48163">
    <property type="entry name" value="An anticodon-binding domain of class I aminoacyl-tRNA synthetases"/>
    <property type="match status" value="1"/>
</dbReference>
<dbReference type="SUPFAM" id="SSF52374">
    <property type="entry name" value="Nucleotidylyl transferase"/>
    <property type="match status" value="1"/>
</dbReference>
<dbReference type="PROSITE" id="PS00178">
    <property type="entry name" value="AA_TRNA_LIGASE_I"/>
    <property type="match status" value="1"/>
</dbReference>
<sequence length="468" mass="53079">MEPVITRFPPSPTGDLHIGGARTALFNWLFARHFGGRFILRIEDTDLVRSTESSIKAILDAMEWLSLDWDEGPYYQTKRLDVYKDYLQRMVDGGAAYYCDCAPDDLERRRKSAMAEGRKPKYDGRCRDRGLGPGPDRVLRFRCPDSGTTVLNDIIKGPIFFENAELDDLVLQRSDGMPTYNFAVVVDDVTMNITHVIRGDDHVNNTPRQILIYQALGARLPYFAHVPMILGEDRARLSKRHGATSVMAYRDMGILPEALINYLVRLGWSHGDQEIFTRRELIETFSLENVGKSASVFNPEKFLWLNAHYLRERSPEALVPLLQPFLDAKGYPARSPEYVARAIPTLQPRVRTLVEMAEQMRFYLVDEVEYDPEAARKFLVSAMREPFNRLLAELAALDGFSHERLESVFQQIVSELGLKLGKVAQPVRVALTGGTVSPGLFEIIDVLGKDAVLKRLNNALRFIDRQAG</sequence>
<protein>
    <recommendedName>
        <fullName evidence="1">Glutamate--tRNA ligase</fullName>
        <ecNumber evidence="1">6.1.1.17</ecNumber>
    </recommendedName>
    <alternativeName>
        <fullName evidence="1">Glutamyl-tRNA synthetase</fullName>
        <shortName evidence="1">GluRS</shortName>
    </alternativeName>
</protein>
<reference key="1">
    <citation type="submission" date="2006-10" db="EMBL/GenBank/DDBJ databases">
        <title>Complete sequence of Syntrophobacter fumaroxidans MPOB.</title>
        <authorList>
            <consortium name="US DOE Joint Genome Institute"/>
            <person name="Copeland A."/>
            <person name="Lucas S."/>
            <person name="Lapidus A."/>
            <person name="Barry K."/>
            <person name="Detter J.C."/>
            <person name="Glavina del Rio T."/>
            <person name="Hammon N."/>
            <person name="Israni S."/>
            <person name="Pitluck S."/>
            <person name="Goltsman E.G."/>
            <person name="Martinez M."/>
            <person name="Schmutz J."/>
            <person name="Larimer F."/>
            <person name="Land M."/>
            <person name="Hauser L."/>
            <person name="Kyrpides N."/>
            <person name="Kim E."/>
            <person name="Boone D.R."/>
            <person name="Brockman F."/>
            <person name="Culley D."/>
            <person name="Ferry J."/>
            <person name="Gunsalus R."/>
            <person name="McInerney M.J."/>
            <person name="Morrison M."/>
            <person name="Plugge C."/>
            <person name="Rohlin L."/>
            <person name="Scholten J."/>
            <person name="Sieber J."/>
            <person name="Stams A.J.M."/>
            <person name="Worm P."/>
            <person name="Henstra A.M."/>
            <person name="Richardson P."/>
        </authorList>
    </citation>
    <scope>NUCLEOTIDE SEQUENCE [LARGE SCALE GENOMIC DNA]</scope>
    <source>
        <strain>DSM 10017 / MPOB</strain>
    </source>
</reference>
<comment type="function">
    <text evidence="1">Catalyzes the attachment of glutamate to tRNA(Glu) in a two-step reaction: glutamate is first activated by ATP to form Glu-AMP and then transferred to the acceptor end of tRNA(Glu).</text>
</comment>
<comment type="catalytic activity">
    <reaction evidence="1">
        <text>tRNA(Glu) + L-glutamate + ATP = L-glutamyl-tRNA(Glu) + AMP + diphosphate</text>
        <dbReference type="Rhea" id="RHEA:23540"/>
        <dbReference type="Rhea" id="RHEA-COMP:9663"/>
        <dbReference type="Rhea" id="RHEA-COMP:9680"/>
        <dbReference type="ChEBI" id="CHEBI:29985"/>
        <dbReference type="ChEBI" id="CHEBI:30616"/>
        <dbReference type="ChEBI" id="CHEBI:33019"/>
        <dbReference type="ChEBI" id="CHEBI:78442"/>
        <dbReference type="ChEBI" id="CHEBI:78520"/>
        <dbReference type="ChEBI" id="CHEBI:456215"/>
        <dbReference type="EC" id="6.1.1.17"/>
    </reaction>
</comment>
<comment type="cofactor">
    <cofactor evidence="1">
        <name>Zn(2+)</name>
        <dbReference type="ChEBI" id="CHEBI:29105"/>
    </cofactor>
    <text evidence="1">Binds 1 zinc ion per subunit.</text>
</comment>
<comment type="subunit">
    <text evidence="1">Monomer.</text>
</comment>
<comment type="subcellular location">
    <subcellularLocation>
        <location evidence="1">Cytoplasm</location>
    </subcellularLocation>
</comment>
<comment type="similarity">
    <text evidence="1">Belongs to the class-I aminoacyl-tRNA synthetase family. Glutamate--tRNA ligase type 1 subfamily.</text>
</comment>
<feature type="chain" id="PRO_1000001978" description="Glutamate--tRNA ligase">
    <location>
        <begin position="1"/>
        <end position="468"/>
    </location>
</feature>
<feature type="short sequence motif" description="'HIGH' region" evidence="1">
    <location>
        <begin position="10"/>
        <end position="20"/>
    </location>
</feature>
<feature type="short sequence motif" description="'KMSKS' region" evidence="1">
    <location>
        <begin position="236"/>
        <end position="240"/>
    </location>
</feature>
<feature type="binding site" evidence="1">
    <location>
        <position position="99"/>
    </location>
    <ligand>
        <name>Zn(2+)</name>
        <dbReference type="ChEBI" id="CHEBI:29105"/>
    </ligand>
</feature>
<feature type="binding site" evidence="1">
    <location>
        <position position="101"/>
    </location>
    <ligand>
        <name>Zn(2+)</name>
        <dbReference type="ChEBI" id="CHEBI:29105"/>
    </ligand>
</feature>
<feature type="binding site" evidence="1">
    <location>
        <position position="126"/>
    </location>
    <ligand>
        <name>Zn(2+)</name>
        <dbReference type="ChEBI" id="CHEBI:29105"/>
    </ligand>
</feature>
<feature type="binding site" evidence="1">
    <location>
        <position position="128"/>
    </location>
    <ligand>
        <name>Zn(2+)</name>
        <dbReference type="ChEBI" id="CHEBI:29105"/>
    </ligand>
</feature>
<feature type="binding site" evidence="1">
    <location>
        <position position="239"/>
    </location>
    <ligand>
        <name>ATP</name>
        <dbReference type="ChEBI" id="CHEBI:30616"/>
    </ligand>
</feature>
<organism>
    <name type="scientific">Syntrophobacter fumaroxidans (strain DSM 10017 / MPOB)</name>
    <dbReference type="NCBI Taxonomy" id="335543"/>
    <lineage>
        <taxon>Bacteria</taxon>
        <taxon>Pseudomonadati</taxon>
        <taxon>Thermodesulfobacteriota</taxon>
        <taxon>Syntrophobacteria</taxon>
        <taxon>Syntrophobacterales</taxon>
        <taxon>Syntrophobacteraceae</taxon>
        <taxon>Syntrophobacter</taxon>
    </lineage>
</organism>
<evidence type="ECO:0000255" key="1">
    <source>
        <dbReference type="HAMAP-Rule" id="MF_00022"/>
    </source>
</evidence>
<accession>A0LI05</accession>
<proteinExistence type="inferred from homology"/>